<accession>Q92AE5</accession>
<reference key="1">
    <citation type="journal article" date="2001" name="Science">
        <title>Comparative genomics of Listeria species.</title>
        <authorList>
            <person name="Glaser P."/>
            <person name="Frangeul L."/>
            <person name="Buchrieser C."/>
            <person name="Rusniok C."/>
            <person name="Amend A."/>
            <person name="Baquero F."/>
            <person name="Berche P."/>
            <person name="Bloecker H."/>
            <person name="Brandt P."/>
            <person name="Chakraborty T."/>
            <person name="Charbit A."/>
            <person name="Chetouani F."/>
            <person name="Couve E."/>
            <person name="de Daruvar A."/>
            <person name="Dehoux P."/>
            <person name="Domann E."/>
            <person name="Dominguez-Bernal G."/>
            <person name="Duchaud E."/>
            <person name="Durant L."/>
            <person name="Dussurget O."/>
            <person name="Entian K.-D."/>
            <person name="Fsihi H."/>
            <person name="Garcia-del Portillo F."/>
            <person name="Garrido P."/>
            <person name="Gautier L."/>
            <person name="Goebel W."/>
            <person name="Gomez-Lopez N."/>
            <person name="Hain T."/>
            <person name="Hauf J."/>
            <person name="Jackson D."/>
            <person name="Jones L.-M."/>
            <person name="Kaerst U."/>
            <person name="Kreft J."/>
            <person name="Kuhn M."/>
            <person name="Kunst F."/>
            <person name="Kurapkat G."/>
            <person name="Madueno E."/>
            <person name="Maitournam A."/>
            <person name="Mata Vicente J."/>
            <person name="Ng E."/>
            <person name="Nedjari H."/>
            <person name="Nordsiek G."/>
            <person name="Novella S."/>
            <person name="de Pablos B."/>
            <person name="Perez-Diaz J.-C."/>
            <person name="Purcell R."/>
            <person name="Remmel B."/>
            <person name="Rose M."/>
            <person name="Schlueter T."/>
            <person name="Simoes N."/>
            <person name="Tierrez A."/>
            <person name="Vazquez-Boland J.-A."/>
            <person name="Voss H."/>
            <person name="Wehland J."/>
            <person name="Cossart P."/>
        </authorList>
    </citation>
    <scope>NUCLEOTIDE SEQUENCE [LARGE SCALE GENOMIC DNA]</scope>
    <source>
        <strain>ATCC BAA-680 / CLIP 11262</strain>
    </source>
</reference>
<keyword id="KW-0446">Lipid-binding</keyword>
<protein>
    <recommendedName>
        <fullName>DegV domain-containing protein lin1977</fullName>
    </recommendedName>
</protein>
<comment type="function">
    <text evidence="1">May bind long-chain fatty acids, such as palmitate, and may play a role in lipid transport or fatty acid metabolism.</text>
</comment>
<evidence type="ECO:0000250" key="1"/>
<evidence type="ECO:0000250" key="2">
    <source>
        <dbReference type="UniProtKB" id="Q9X1H9"/>
    </source>
</evidence>
<evidence type="ECO:0000255" key="3">
    <source>
        <dbReference type="PROSITE-ProRule" id="PRU00815"/>
    </source>
</evidence>
<sequence length="279" mass="30892">MRKIKIITDSTAGLTLEEAAKWNIEVLYLTVEIDGKVYNPKTDITPEEFMVRMAETKELPKSSQPAIGSFVEAYEKYTAEGYEILSIHLTEKLSGTVNAARQAADMVEGNITVVDCDYTARGQAFQVLKAAEMAQAGDYSVEEIHAAINDIRDKTKLYIVVVTLDNLIKGGRVGRMQGFLGSLLNIKLIAKLTDGQLEEETKVRSNKKVLQYCLNLIKDEPKKIQQLDVVHANGLNLADDFIAESKEITGLTEIPLFFADPVISTHAGTGAFAFMYYTD</sequence>
<gene>
    <name type="ordered locus">lin1977</name>
</gene>
<name>Y1977_LISIN</name>
<proteinExistence type="inferred from homology"/>
<dbReference type="EMBL" id="AL596170">
    <property type="protein sequence ID" value="CAC97207.1"/>
    <property type="molecule type" value="Genomic_DNA"/>
</dbReference>
<dbReference type="PIR" id="AG1679">
    <property type="entry name" value="AG1679"/>
</dbReference>
<dbReference type="RefSeq" id="WP_003769344.1">
    <property type="nucleotide sequence ID" value="NC_003212.1"/>
</dbReference>
<dbReference type="SMR" id="Q92AE5"/>
<dbReference type="STRING" id="272626.gene:17566335"/>
<dbReference type="GeneID" id="93235315"/>
<dbReference type="KEGG" id="lin:lin1977"/>
<dbReference type="eggNOG" id="COG1307">
    <property type="taxonomic scope" value="Bacteria"/>
</dbReference>
<dbReference type="HOGENOM" id="CLU_048251_3_2_9"/>
<dbReference type="OrthoDB" id="5429275at2"/>
<dbReference type="Proteomes" id="UP000002513">
    <property type="component" value="Chromosome"/>
</dbReference>
<dbReference type="GO" id="GO:0008289">
    <property type="term" value="F:lipid binding"/>
    <property type="evidence" value="ECO:0007669"/>
    <property type="project" value="UniProtKB-KW"/>
</dbReference>
<dbReference type="Gene3D" id="3.30.1180.10">
    <property type="match status" value="1"/>
</dbReference>
<dbReference type="Gene3D" id="3.40.50.10170">
    <property type="match status" value="1"/>
</dbReference>
<dbReference type="InterPro" id="IPR003797">
    <property type="entry name" value="DegV"/>
</dbReference>
<dbReference type="InterPro" id="IPR043168">
    <property type="entry name" value="DegV_C"/>
</dbReference>
<dbReference type="InterPro" id="IPR050270">
    <property type="entry name" value="DegV_domain_contain"/>
</dbReference>
<dbReference type="NCBIfam" id="TIGR00762">
    <property type="entry name" value="DegV"/>
    <property type="match status" value="1"/>
</dbReference>
<dbReference type="PANTHER" id="PTHR33434">
    <property type="entry name" value="DEGV DOMAIN-CONTAINING PROTEIN DR_1986-RELATED"/>
    <property type="match status" value="1"/>
</dbReference>
<dbReference type="PANTHER" id="PTHR33434:SF8">
    <property type="entry name" value="DEGV DOMAIN-CONTAINING PROTEIN SPR1019"/>
    <property type="match status" value="1"/>
</dbReference>
<dbReference type="Pfam" id="PF02645">
    <property type="entry name" value="DegV"/>
    <property type="match status" value="1"/>
</dbReference>
<dbReference type="SUPFAM" id="SSF82549">
    <property type="entry name" value="DAK1/DegV-like"/>
    <property type="match status" value="1"/>
</dbReference>
<dbReference type="PROSITE" id="PS51482">
    <property type="entry name" value="DEGV"/>
    <property type="match status" value="1"/>
</dbReference>
<feature type="chain" id="PRO_0000209768" description="DegV domain-containing protein lin1977">
    <location>
        <begin position="1"/>
        <end position="279"/>
    </location>
</feature>
<feature type="domain" description="DegV" evidence="3">
    <location>
        <begin position="4"/>
        <end position="278"/>
    </location>
</feature>
<feature type="binding site" evidence="2">
    <location>
        <position position="62"/>
    </location>
    <ligand>
        <name>hexadecanoate</name>
        <dbReference type="ChEBI" id="CHEBI:7896"/>
    </ligand>
</feature>
<feature type="binding site" evidence="2">
    <location>
        <position position="94"/>
    </location>
    <ligand>
        <name>hexadecanoate</name>
        <dbReference type="ChEBI" id="CHEBI:7896"/>
    </ligand>
</feature>
<organism>
    <name type="scientific">Listeria innocua serovar 6a (strain ATCC BAA-680 / CLIP 11262)</name>
    <dbReference type="NCBI Taxonomy" id="272626"/>
    <lineage>
        <taxon>Bacteria</taxon>
        <taxon>Bacillati</taxon>
        <taxon>Bacillota</taxon>
        <taxon>Bacilli</taxon>
        <taxon>Bacillales</taxon>
        <taxon>Listeriaceae</taxon>
        <taxon>Listeria</taxon>
    </lineage>
</organism>